<proteinExistence type="inferred from homology"/>
<accession>P37844</accession>
<organism>
    <name type="scientific">Bazzania trilobata</name>
    <name type="common">Greater whipwort</name>
    <name type="synonym">Jungermannia trilobata</name>
    <dbReference type="NCBI Taxonomy" id="13808"/>
    <lineage>
        <taxon>Eukaryota</taxon>
        <taxon>Viridiplantae</taxon>
        <taxon>Streptophyta</taxon>
        <taxon>Embryophyta</taxon>
        <taxon>Marchantiophyta</taxon>
        <taxon>Jungermanniopsida</taxon>
        <taxon>Jungermanniidae</taxon>
        <taxon>Jungermanniales</taxon>
        <taxon>Lophocoleineae</taxon>
        <taxon>Lepidoziaceae</taxon>
        <taxon>Bazzanioideae</taxon>
        <taxon>Bazzania</taxon>
    </lineage>
</organism>
<comment type="function">
    <text evidence="1">Component of the dark-operative protochlorophyllide reductase (DPOR) that uses Mg-ATP and reduced ferredoxin to reduce ring D of protochlorophyllide (Pchlide) to form chlorophyllide a (Chlide). This reaction is light-independent. The NB-protein (ChlN-ChlB) is the catalytic component of the complex (By similarity).</text>
</comment>
<comment type="catalytic activity">
    <reaction>
        <text>chlorophyllide a + oxidized 2[4Fe-4S]-[ferredoxin] + 2 ADP + 2 phosphate = protochlorophyllide a + reduced 2[4Fe-4S]-[ferredoxin] + 2 ATP + 2 H2O</text>
        <dbReference type="Rhea" id="RHEA:28202"/>
        <dbReference type="Rhea" id="RHEA-COMP:10002"/>
        <dbReference type="Rhea" id="RHEA-COMP:10004"/>
        <dbReference type="ChEBI" id="CHEBI:15377"/>
        <dbReference type="ChEBI" id="CHEBI:30616"/>
        <dbReference type="ChEBI" id="CHEBI:33722"/>
        <dbReference type="ChEBI" id="CHEBI:33723"/>
        <dbReference type="ChEBI" id="CHEBI:43474"/>
        <dbReference type="ChEBI" id="CHEBI:83348"/>
        <dbReference type="ChEBI" id="CHEBI:83350"/>
        <dbReference type="ChEBI" id="CHEBI:456216"/>
        <dbReference type="EC" id="1.3.7.7"/>
    </reaction>
</comment>
<comment type="cofactor">
    <cofactor evidence="1">
        <name>[4Fe-4S] cluster</name>
        <dbReference type="ChEBI" id="CHEBI:49883"/>
    </cofactor>
    <text evidence="1">Binds 1 [4Fe-4S] cluster per heterodimer. The cluster is bound at the heterodimer interface by residues from both subunits.</text>
</comment>
<comment type="pathway">
    <text>Porphyrin-containing compound metabolism; chlorophyll biosynthesis (light-independent).</text>
</comment>
<comment type="subunit">
    <text evidence="1">Protochlorophyllide reductase is composed of three subunits; ChlL, ChlN and ChlB. Forms a heterotetramer of two ChlB and two ChlN subunits (By similarity).</text>
</comment>
<comment type="subcellular location">
    <subcellularLocation>
        <location>Plastid</location>
        <location>Chloroplast</location>
    </subcellularLocation>
</comment>
<comment type="similarity">
    <text evidence="2">Belongs to the ChlB/BchB/BchZ family.</text>
</comment>
<gene>
    <name type="primary">chlB</name>
</gene>
<geneLocation type="chloroplast"/>
<dbReference type="EC" id="1.3.7.7"/>
<dbReference type="EMBL" id="L25764">
    <property type="protein sequence ID" value="AAC37485.1"/>
    <property type="molecule type" value="Genomic_DNA"/>
</dbReference>
<dbReference type="SMR" id="P37844"/>
<dbReference type="UniPathway" id="UPA00670"/>
<dbReference type="GO" id="GO:0009507">
    <property type="term" value="C:chloroplast"/>
    <property type="evidence" value="ECO:0007669"/>
    <property type="project" value="UniProtKB-SubCell"/>
</dbReference>
<dbReference type="GO" id="GO:0051539">
    <property type="term" value="F:4 iron, 4 sulfur cluster binding"/>
    <property type="evidence" value="ECO:0007669"/>
    <property type="project" value="UniProtKB-KW"/>
</dbReference>
<dbReference type="GO" id="GO:0005524">
    <property type="term" value="F:ATP binding"/>
    <property type="evidence" value="ECO:0007669"/>
    <property type="project" value="UniProtKB-KW"/>
</dbReference>
<dbReference type="GO" id="GO:0046872">
    <property type="term" value="F:metal ion binding"/>
    <property type="evidence" value="ECO:0007669"/>
    <property type="project" value="UniProtKB-KW"/>
</dbReference>
<dbReference type="GO" id="GO:0016491">
    <property type="term" value="F:oxidoreductase activity"/>
    <property type="evidence" value="ECO:0007669"/>
    <property type="project" value="UniProtKB-KW"/>
</dbReference>
<dbReference type="GO" id="GO:0036068">
    <property type="term" value="P:light-independent chlorophyll biosynthetic process"/>
    <property type="evidence" value="ECO:0007669"/>
    <property type="project" value="UniProtKB-UniPathway"/>
</dbReference>
<dbReference type="GO" id="GO:0015979">
    <property type="term" value="P:photosynthesis"/>
    <property type="evidence" value="ECO:0007669"/>
    <property type="project" value="UniProtKB-KW"/>
</dbReference>
<dbReference type="Gene3D" id="3.40.50.1980">
    <property type="entry name" value="Nitrogenase molybdenum iron protein domain"/>
    <property type="match status" value="1"/>
</dbReference>
<dbReference type="InterPro" id="IPR050152">
    <property type="entry name" value="ChlB/BchB/BchZ"/>
</dbReference>
<dbReference type="InterPro" id="IPR000510">
    <property type="entry name" value="Nase/OxRdtase_comp1"/>
</dbReference>
<dbReference type="PANTHER" id="PTHR33712">
    <property type="entry name" value="LIGHT-INDEPENDENT PROTOCHLOROPHYLLIDE REDUCTASE SUBUNIT B"/>
    <property type="match status" value="1"/>
</dbReference>
<dbReference type="PANTHER" id="PTHR33712:SF7">
    <property type="entry name" value="LIGHT-INDEPENDENT PROTOCHLOROPHYLLIDE REDUCTASE SUBUNIT B"/>
    <property type="match status" value="1"/>
</dbReference>
<dbReference type="Pfam" id="PF00148">
    <property type="entry name" value="Oxidored_nitro"/>
    <property type="match status" value="1"/>
</dbReference>
<dbReference type="SUPFAM" id="SSF53807">
    <property type="entry name" value="Helical backbone' metal receptor"/>
    <property type="match status" value="1"/>
</dbReference>
<feature type="chain" id="PRO_0000219811" description="Light-independent protochlorophyllide reductase subunit B">
    <location>
        <begin position="1" status="less than"/>
        <end position="103" status="greater than"/>
    </location>
</feature>
<feature type="non-terminal residue">
    <location>
        <position position="1"/>
    </location>
</feature>
<feature type="non-terminal residue">
    <location>
        <position position="103"/>
    </location>
</feature>
<reference key="1">
    <citation type="journal article" date="1996" name="Mol. Phylogenet. Evol.">
        <title>Phylogenetic inferences from chloroplast chlB gene sequences of Nephrolepis exaltata (Filicopsida), Ephedra altissima (Gnetopsida), and diverse land plants.</title>
        <authorList>
            <person name="Boivin R."/>
            <person name="Richard M."/>
            <person name="Beauseigle D."/>
            <person name="Bousquet J."/>
            <person name="Bellemare G."/>
        </authorList>
    </citation>
    <scope>NUCLEOTIDE SEQUENCE [GENOMIC DNA]</scope>
</reference>
<evidence type="ECO:0000250" key="1"/>
<evidence type="ECO:0000305" key="2"/>
<name>CHLB_BAZTR</name>
<sequence length="103" mass="12061">KRLLKDLSIEINQVIPEGGSVENLRQLPKAWFNLVPYREVGLMTAKYLEKEFGMSYISITPMGVVDIANCIRQMEERINIMSPILLNRRVNYEPYINEQTRFI</sequence>
<protein>
    <recommendedName>
        <fullName>Light-independent protochlorophyllide reductase subunit B</fullName>
        <shortName>DPOR subunit B</shortName>
        <shortName>LI-POR subunit B</shortName>
        <ecNumber>1.3.7.7</ecNumber>
    </recommendedName>
</protein>
<keyword id="KW-0004">4Fe-4S</keyword>
<keyword id="KW-0067">ATP-binding</keyword>
<keyword id="KW-0149">Chlorophyll biosynthesis</keyword>
<keyword id="KW-0150">Chloroplast</keyword>
<keyword id="KW-0408">Iron</keyword>
<keyword id="KW-0411">Iron-sulfur</keyword>
<keyword id="KW-0479">Metal-binding</keyword>
<keyword id="KW-0547">Nucleotide-binding</keyword>
<keyword id="KW-0560">Oxidoreductase</keyword>
<keyword id="KW-0602">Photosynthesis</keyword>
<keyword id="KW-0934">Plastid</keyword>